<sequence>MAKGARDKIKLESTAGTGHFYTTTKNKRNMPEKMEIMKFDPVARKHVAYKETKIK</sequence>
<accession>Q3JV55</accession>
<comment type="similarity">
    <text evidence="1">Belongs to the bacterial ribosomal protein bL33 family.</text>
</comment>
<organism>
    <name type="scientific">Burkholderia pseudomallei (strain 1710b)</name>
    <dbReference type="NCBI Taxonomy" id="320372"/>
    <lineage>
        <taxon>Bacteria</taxon>
        <taxon>Pseudomonadati</taxon>
        <taxon>Pseudomonadota</taxon>
        <taxon>Betaproteobacteria</taxon>
        <taxon>Burkholderiales</taxon>
        <taxon>Burkholderiaceae</taxon>
        <taxon>Burkholderia</taxon>
        <taxon>pseudomallei group</taxon>
    </lineage>
</organism>
<evidence type="ECO:0000255" key="1">
    <source>
        <dbReference type="HAMAP-Rule" id="MF_00294"/>
    </source>
</evidence>
<evidence type="ECO:0000256" key="2">
    <source>
        <dbReference type="SAM" id="MobiDB-lite"/>
    </source>
</evidence>
<evidence type="ECO:0000305" key="3"/>
<reference key="1">
    <citation type="journal article" date="2010" name="Genome Biol. Evol.">
        <title>Continuing evolution of Burkholderia mallei through genome reduction and large-scale rearrangements.</title>
        <authorList>
            <person name="Losada L."/>
            <person name="Ronning C.M."/>
            <person name="DeShazer D."/>
            <person name="Woods D."/>
            <person name="Fedorova N."/>
            <person name="Kim H.S."/>
            <person name="Shabalina S.A."/>
            <person name="Pearson T.R."/>
            <person name="Brinkac L."/>
            <person name="Tan P."/>
            <person name="Nandi T."/>
            <person name="Crabtree J."/>
            <person name="Badger J."/>
            <person name="Beckstrom-Sternberg S."/>
            <person name="Saqib M."/>
            <person name="Schutzer S.E."/>
            <person name="Keim P."/>
            <person name="Nierman W.C."/>
        </authorList>
    </citation>
    <scope>NUCLEOTIDE SEQUENCE [LARGE SCALE GENOMIC DNA]</scope>
    <source>
        <strain>1710b</strain>
    </source>
</reference>
<feature type="chain" id="PRO_1000115113" description="Large ribosomal subunit protein bL33">
    <location>
        <begin position="1"/>
        <end position="55"/>
    </location>
</feature>
<feature type="region of interest" description="Disordered" evidence="2">
    <location>
        <begin position="1"/>
        <end position="24"/>
    </location>
</feature>
<feature type="compositionally biased region" description="Basic and acidic residues" evidence="2">
    <location>
        <begin position="1"/>
        <end position="11"/>
    </location>
</feature>
<feature type="compositionally biased region" description="Polar residues" evidence="2">
    <location>
        <begin position="14"/>
        <end position="24"/>
    </location>
</feature>
<protein>
    <recommendedName>
        <fullName evidence="1">Large ribosomal subunit protein bL33</fullName>
    </recommendedName>
    <alternativeName>
        <fullName evidence="3">50S ribosomal protein L33</fullName>
    </alternativeName>
</protein>
<keyword id="KW-0687">Ribonucleoprotein</keyword>
<keyword id="KW-0689">Ribosomal protein</keyword>
<name>RL33_BURP1</name>
<dbReference type="EMBL" id="CP000124">
    <property type="protein sequence ID" value="ABA50395.1"/>
    <property type="molecule type" value="Genomic_DNA"/>
</dbReference>
<dbReference type="RefSeq" id="WP_004185395.1">
    <property type="nucleotide sequence ID" value="NC_007434.1"/>
</dbReference>
<dbReference type="SMR" id="Q3JV55"/>
<dbReference type="EnsemblBacteria" id="ABA50395">
    <property type="protein sequence ID" value="ABA50395"/>
    <property type="gene ID" value="BURPS1710b_1136"/>
</dbReference>
<dbReference type="GeneID" id="95550920"/>
<dbReference type="KEGG" id="bpm:BURPS1710b_1136"/>
<dbReference type="HOGENOM" id="CLU_190949_1_1_4"/>
<dbReference type="Proteomes" id="UP000002700">
    <property type="component" value="Chromosome I"/>
</dbReference>
<dbReference type="GO" id="GO:0022625">
    <property type="term" value="C:cytosolic large ribosomal subunit"/>
    <property type="evidence" value="ECO:0007669"/>
    <property type="project" value="TreeGrafter"/>
</dbReference>
<dbReference type="GO" id="GO:0003735">
    <property type="term" value="F:structural constituent of ribosome"/>
    <property type="evidence" value="ECO:0007669"/>
    <property type="project" value="InterPro"/>
</dbReference>
<dbReference type="GO" id="GO:0006412">
    <property type="term" value="P:translation"/>
    <property type="evidence" value="ECO:0007669"/>
    <property type="project" value="UniProtKB-UniRule"/>
</dbReference>
<dbReference type="FunFam" id="2.20.28.120:FF:000001">
    <property type="entry name" value="50S ribosomal protein L33"/>
    <property type="match status" value="1"/>
</dbReference>
<dbReference type="Gene3D" id="2.20.28.120">
    <property type="entry name" value="Ribosomal protein L33"/>
    <property type="match status" value="1"/>
</dbReference>
<dbReference type="HAMAP" id="MF_00294">
    <property type="entry name" value="Ribosomal_bL33"/>
    <property type="match status" value="1"/>
</dbReference>
<dbReference type="InterPro" id="IPR001705">
    <property type="entry name" value="Ribosomal_bL33"/>
</dbReference>
<dbReference type="InterPro" id="IPR018264">
    <property type="entry name" value="Ribosomal_bL33_CS"/>
</dbReference>
<dbReference type="InterPro" id="IPR038584">
    <property type="entry name" value="Ribosomal_bL33_sf"/>
</dbReference>
<dbReference type="InterPro" id="IPR011332">
    <property type="entry name" value="Ribosomal_zn-bd"/>
</dbReference>
<dbReference type="NCBIfam" id="NF001860">
    <property type="entry name" value="PRK00595.1"/>
    <property type="match status" value="1"/>
</dbReference>
<dbReference type="NCBIfam" id="TIGR01023">
    <property type="entry name" value="rpmG_bact"/>
    <property type="match status" value="1"/>
</dbReference>
<dbReference type="PANTHER" id="PTHR15238">
    <property type="entry name" value="54S RIBOSOMAL PROTEIN L39, MITOCHONDRIAL"/>
    <property type="match status" value="1"/>
</dbReference>
<dbReference type="PANTHER" id="PTHR15238:SF1">
    <property type="entry name" value="LARGE RIBOSOMAL SUBUNIT PROTEIN BL33M"/>
    <property type="match status" value="1"/>
</dbReference>
<dbReference type="Pfam" id="PF00471">
    <property type="entry name" value="Ribosomal_L33"/>
    <property type="match status" value="1"/>
</dbReference>
<dbReference type="SUPFAM" id="SSF57829">
    <property type="entry name" value="Zn-binding ribosomal proteins"/>
    <property type="match status" value="1"/>
</dbReference>
<dbReference type="PROSITE" id="PS00582">
    <property type="entry name" value="RIBOSOMAL_L33"/>
    <property type="match status" value="1"/>
</dbReference>
<proteinExistence type="inferred from homology"/>
<gene>
    <name evidence="1" type="primary">rpmG</name>
    <name type="ordered locus">BURPS1710b_1136</name>
</gene>